<name>DNAA_ACAM1</name>
<feature type="chain" id="PRO_1000079938" description="Chromosomal replication initiator protein DnaA">
    <location>
        <begin position="1"/>
        <end position="455"/>
    </location>
</feature>
<feature type="region of interest" description="Domain I, interacts with DnaA modulators" evidence="1">
    <location>
        <begin position="1"/>
        <end position="73"/>
    </location>
</feature>
<feature type="region of interest" description="Domain II" evidence="1">
    <location>
        <begin position="73"/>
        <end position="116"/>
    </location>
</feature>
<feature type="region of interest" description="Disordered" evidence="2">
    <location>
        <begin position="92"/>
        <end position="116"/>
    </location>
</feature>
<feature type="region of interest" description="Domain III, AAA+ region" evidence="1">
    <location>
        <begin position="117"/>
        <end position="333"/>
    </location>
</feature>
<feature type="region of interest" description="Domain IV, binds dsDNA" evidence="1">
    <location>
        <begin position="334"/>
        <end position="455"/>
    </location>
</feature>
<feature type="compositionally biased region" description="Polar residues" evidence="2">
    <location>
        <begin position="104"/>
        <end position="116"/>
    </location>
</feature>
<feature type="binding site" evidence="1">
    <location>
        <position position="161"/>
    </location>
    <ligand>
        <name>ATP</name>
        <dbReference type="ChEBI" id="CHEBI:30616"/>
    </ligand>
</feature>
<feature type="binding site" evidence="1">
    <location>
        <position position="163"/>
    </location>
    <ligand>
        <name>ATP</name>
        <dbReference type="ChEBI" id="CHEBI:30616"/>
    </ligand>
</feature>
<feature type="binding site" evidence="1">
    <location>
        <position position="164"/>
    </location>
    <ligand>
        <name>ATP</name>
        <dbReference type="ChEBI" id="CHEBI:30616"/>
    </ligand>
</feature>
<feature type="binding site" evidence="1">
    <location>
        <position position="165"/>
    </location>
    <ligand>
        <name>ATP</name>
        <dbReference type="ChEBI" id="CHEBI:30616"/>
    </ligand>
</feature>
<gene>
    <name evidence="1" type="primary">dnaA</name>
    <name type="ordered locus">AM1_3095</name>
</gene>
<comment type="function">
    <text evidence="1">Plays an essential role in the initiation and regulation of chromosomal replication. ATP-DnaA binds to the origin of replication (oriC) to initiate formation of the DNA replication initiation complex once per cell cycle. Binds the DnaA box (a 9 base pair repeat at the origin) and separates the double-stranded (ds)DNA. Forms a right-handed helical filament on oriC DNA; dsDNA binds to the exterior of the filament while single-stranded (ss)DNA is stabiized in the filament's interior. The ATP-DnaA-oriC complex binds and stabilizes one strand of the AT-rich DNA unwinding element (DUE), permitting loading of DNA polymerase. After initiation quickly degrades to an ADP-DnaA complex that is not apt for DNA replication. Binds acidic phospholipids.</text>
</comment>
<comment type="subunit">
    <text evidence="1">Oligomerizes as a right-handed, spiral filament on DNA at oriC.</text>
</comment>
<comment type="subcellular location">
    <subcellularLocation>
        <location evidence="1">Cytoplasm</location>
    </subcellularLocation>
</comment>
<comment type="domain">
    <text evidence="1">Domain I is involved in oligomerization and binding regulators, domain II is flexibile and of varying length in different bacteria, domain III forms the AAA+ region, while domain IV binds dsDNA.</text>
</comment>
<comment type="similarity">
    <text evidence="1">Belongs to the DnaA family.</text>
</comment>
<keyword id="KW-0067">ATP-binding</keyword>
<keyword id="KW-0963">Cytoplasm</keyword>
<keyword id="KW-0235">DNA replication</keyword>
<keyword id="KW-0238">DNA-binding</keyword>
<keyword id="KW-0446">Lipid-binding</keyword>
<keyword id="KW-0547">Nucleotide-binding</keyword>
<keyword id="KW-1185">Reference proteome</keyword>
<organism>
    <name type="scientific">Acaryochloris marina (strain MBIC 11017)</name>
    <dbReference type="NCBI Taxonomy" id="329726"/>
    <lineage>
        <taxon>Bacteria</taxon>
        <taxon>Bacillati</taxon>
        <taxon>Cyanobacteriota</taxon>
        <taxon>Cyanophyceae</taxon>
        <taxon>Acaryochloridales</taxon>
        <taxon>Acaryochloridaceae</taxon>
        <taxon>Acaryochloris</taxon>
    </lineage>
</organism>
<accession>B0CDM2</accession>
<evidence type="ECO:0000255" key="1">
    <source>
        <dbReference type="HAMAP-Rule" id="MF_00377"/>
    </source>
</evidence>
<evidence type="ECO:0000256" key="2">
    <source>
        <dbReference type="SAM" id="MobiDB-lite"/>
    </source>
</evidence>
<proteinExistence type="inferred from homology"/>
<sequence>METSLETLWSQVLERLQLQLSRPTFETWIKTANAEQLDENRLVIRTPNPFARNWLQKYYVKTIRDVVHEILGHPVEIQIEIAQGDSNATISAPEVASPPPTASPVENTNTSQRQQASLNPKYVFSRYVVGPNNRMAHAACLAVAESPGREFNPLFLCGGVGLGKTHLMQAIGHYRLEISPNSRIFYISTEQFTNDLIAAIRKDGMQKFREHYRAVDVMLVDDIQFIEGKEYTQEEFFHTFNTLHEAGKQVVLASDRPPSQIPRLQERLCSRFSMGLIADIQPPDLETRMAILQKKAEYENIRLPREVIEYIASSYTSNIRELEGALIRAVAYISISGLPMNVENIAPVLNPPTAKISASPESIINAVADTYGISIDDLKGNSRRREISMARQIGMYLMRQHTDLSLPKIGEEFGGKDHTTVMYSCDKVSDLQKKNPELAQSLRQLGDRIKLANQP</sequence>
<reference key="1">
    <citation type="journal article" date="2008" name="Proc. Natl. Acad. Sci. U.S.A.">
        <title>Niche adaptation and genome expansion in the chlorophyll d-producing cyanobacterium Acaryochloris marina.</title>
        <authorList>
            <person name="Swingley W.D."/>
            <person name="Chen M."/>
            <person name="Cheung P.C."/>
            <person name="Conrad A.L."/>
            <person name="Dejesa L.C."/>
            <person name="Hao J."/>
            <person name="Honchak B.M."/>
            <person name="Karbach L.E."/>
            <person name="Kurdoglu A."/>
            <person name="Lahiri S."/>
            <person name="Mastrian S.D."/>
            <person name="Miyashita H."/>
            <person name="Page L."/>
            <person name="Ramakrishna P."/>
            <person name="Satoh S."/>
            <person name="Sattley W.M."/>
            <person name="Shimada Y."/>
            <person name="Taylor H.L."/>
            <person name="Tomo T."/>
            <person name="Tsuchiya T."/>
            <person name="Wang Z.T."/>
            <person name="Raymond J."/>
            <person name="Mimuro M."/>
            <person name="Blankenship R.E."/>
            <person name="Touchman J.W."/>
        </authorList>
    </citation>
    <scope>NUCLEOTIDE SEQUENCE [LARGE SCALE GENOMIC DNA]</scope>
    <source>
        <strain>MBIC 11017</strain>
    </source>
</reference>
<dbReference type="EMBL" id="CP000828">
    <property type="protein sequence ID" value="ABW28091.1"/>
    <property type="molecule type" value="Genomic_DNA"/>
</dbReference>
<dbReference type="RefSeq" id="WP_012163519.1">
    <property type="nucleotide sequence ID" value="NC_009925.1"/>
</dbReference>
<dbReference type="SMR" id="B0CDM2"/>
<dbReference type="STRING" id="329726.AM1_3095"/>
<dbReference type="KEGG" id="amr:AM1_3095"/>
<dbReference type="eggNOG" id="COG0593">
    <property type="taxonomic scope" value="Bacteria"/>
</dbReference>
<dbReference type="HOGENOM" id="CLU_026910_3_1_3"/>
<dbReference type="OrthoDB" id="9807019at2"/>
<dbReference type="Proteomes" id="UP000000268">
    <property type="component" value="Chromosome"/>
</dbReference>
<dbReference type="GO" id="GO:0005737">
    <property type="term" value="C:cytoplasm"/>
    <property type="evidence" value="ECO:0007669"/>
    <property type="project" value="UniProtKB-SubCell"/>
</dbReference>
<dbReference type="GO" id="GO:0005886">
    <property type="term" value="C:plasma membrane"/>
    <property type="evidence" value="ECO:0007669"/>
    <property type="project" value="TreeGrafter"/>
</dbReference>
<dbReference type="GO" id="GO:0005524">
    <property type="term" value="F:ATP binding"/>
    <property type="evidence" value="ECO:0007669"/>
    <property type="project" value="UniProtKB-UniRule"/>
</dbReference>
<dbReference type="GO" id="GO:0016887">
    <property type="term" value="F:ATP hydrolysis activity"/>
    <property type="evidence" value="ECO:0007669"/>
    <property type="project" value="InterPro"/>
</dbReference>
<dbReference type="GO" id="GO:0003688">
    <property type="term" value="F:DNA replication origin binding"/>
    <property type="evidence" value="ECO:0007669"/>
    <property type="project" value="UniProtKB-UniRule"/>
</dbReference>
<dbReference type="GO" id="GO:0008289">
    <property type="term" value="F:lipid binding"/>
    <property type="evidence" value="ECO:0007669"/>
    <property type="project" value="UniProtKB-KW"/>
</dbReference>
<dbReference type="GO" id="GO:0006270">
    <property type="term" value="P:DNA replication initiation"/>
    <property type="evidence" value="ECO:0007669"/>
    <property type="project" value="UniProtKB-UniRule"/>
</dbReference>
<dbReference type="GO" id="GO:0006275">
    <property type="term" value="P:regulation of DNA replication"/>
    <property type="evidence" value="ECO:0007669"/>
    <property type="project" value="UniProtKB-UniRule"/>
</dbReference>
<dbReference type="CDD" id="cd00009">
    <property type="entry name" value="AAA"/>
    <property type="match status" value="1"/>
</dbReference>
<dbReference type="CDD" id="cd06571">
    <property type="entry name" value="Bac_DnaA_C"/>
    <property type="match status" value="1"/>
</dbReference>
<dbReference type="FunFam" id="1.10.8.60:FF:000003">
    <property type="entry name" value="Chromosomal replication initiator protein DnaA"/>
    <property type="match status" value="1"/>
</dbReference>
<dbReference type="FunFam" id="3.40.50.300:FF:000150">
    <property type="entry name" value="Chromosomal replication initiator protein DnaA"/>
    <property type="match status" value="1"/>
</dbReference>
<dbReference type="Gene3D" id="1.10.1750.10">
    <property type="match status" value="1"/>
</dbReference>
<dbReference type="Gene3D" id="1.10.8.60">
    <property type="match status" value="1"/>
</dbReference>
<dbReference type="Gene3D" id="3.30.300.180">
    <property type="match status" value="1"/>
</dbReference>
<dbReference type="Gene3D" id="3.40.50.300">
    <property type="entry name" value="P-loop containing nucleotide triphosphate hydrolases"/>
    <property type="match status" value="1"/>
</dbReference>
<dbReference type="HAMAP" id="MF_00377">
    <property type="entry name" value="DnaA_bact"/>
    <property type="match status" value="1"/>
</dbReference>
<dbReference type="InterPro" id="IPR003593">
    <property type="entry name" value="AAA+_ATPase"/>
</dbReference>
<dbReference type="InterPro" id="IPR001957">
    <property type="entry name" value="Chromosome_initiator_DnaA"/>
</dbReference>
<dbReference type="InterPro" id="IPR020591">
    <property type="entry name" value="Chromosome_initiator_DnaA-like"/>
</dbReference>
<dbReference type="InterPro" id="IPR018312">
    <property type="entry name" value="Chromosome_initiator_DnaA_CS"/>
</dbReference>
<dbReference type="InterPro" id="IPR013159">
    <property type="entry name" value="DnaA_C"/>
</dbReference>
<dbReference type="InterPro" id="IPR013317">
    <property type="entry name" value="DnaA_dom"/>
</dbReference>
<dbReference type="InterPro" id="IPR024633">
    <property type="entry name" value="DnaA_N_dom"/>
</dbReference>
<dbReference type="InterPro" id="IPR038454">
    <property type="entry name" value="DnaA_N_sf"/>
</dbReference>
<dbReference type="InterPro" id="IPR027417">
    <property type="entry name" value="P-loop_NTPase"/>
</dbReference>
<dbReference type="InterPro" id="IPR010921">
    <property type="entry name" value="Trp_repressor/repl_initiator"/>
</dbReference>
<dbReference type="NCBIfam" id="TIGR00362">
    <property type="entry name" value="DnaA"/>
    <property type="match status" value="1"/>
</dbReference>
<dbReference type="PANTHER" id="PTHR30050">
    <property type="entry name" value="CHROMOSOMAL REPLICATION INITIATOR PROTEIN DNAA"/>
    <property type="match status" value="1"/>
</dbReference>
<dbReference type="PANTHER" id="PTHR30050:SF2">
    <property type="entry name" value="CHROMOSOMAL REPLICATION INITIATOR PROTEIN DNAA"/>
    <property type="match status" value="1"/>
</dbReference>
<dbReference type="Pfam" id="PF00308">
    <property type="entry name" value="Bac_DnaA"/>
    <property type="match status" value="1"/>
</dbReference>
<dbReference type="Pfam" id="PF08299">
    <property type="entry name" value="Bac_DnaA_C"/>
    <property type="match status" value="1"/>
</dbReference>
<dbReference type="Pfam" id="PF11638">
    <property type="entry name" value="DnaA_N"/>
    <property type="match status" value="1"/>
</dbReference>
<dbReference type="PRINTS" id="PR00051">
    <property type="entry name" value="DNAA"/>
</dbReference>
<dbReference type="SMART" id="SM00382">
    <property type="entry name" value="AAA"/>
    <property type="match status" value="1"/>
</dbReference>
<dbReference type="SMART" id="SM00760">
    <property type="entry name" value="Bac_DnaA_C"/>
    <property type="match status" value="1"/>
</dbReference>
<dbReference type="SUPFAM" id="SSF52540">
    <property type="entry name" value="P-loop containing nucleoside triphosphate hydrolases"/>
    <property type="match status" value="1"/>
</dbReference>
<dbReference type="SUPFAM" id="SSF48295">
    <property type="entry name" value="TrpR-like"/>
    <property type="match status" value="1"/>
</dbReference>
<dbReference type="PROSITE" id="PS01008">
    <property type="entry name" value="DNAA"/>
    <property type="match status" value="1"/>
</dbReference>
<protein>
    <recommendedName>
        <fullName evidence="1">Chromosomal replication initiator protein DnaA</fullName>
    </recommendedName>
</protein>